<dbReference type="EMBL" id="AY081909">
    <property type="protein sequence ID" value="AAL91140.1"/>
    <property type="molecule type" value="mRNA"/>
</dbReference>
<dbReference type="EMBL" id="AK022615">
    <property type="protein sequence ID" value="BAB14134.1"/>
    <property type="molecule type" value="mRNA"/>
</dbReference>
<dbReference type="EMBL" id="AK027622">
    <property type="protein sequence ID" value="BAB55241.1"/>
    <property type="molecule type" value="mRNA"/>
</dbReference>
<dbReference type="EMBL" id="BC027040">
    <property type="protein sequence ID" value="AAH27040.1"/>
    <property type="molecule type" value="mRNA"/>
</dbReference>
<dbReference type="CCDS" id="CCDS419.1"/>
<dbReference type="RefSeq" id="NP_078976.2">
    <property type="nucleotide sequence ID" value="NM_024700.3"/>
</dbReference>
<dbReference type="PDB" id="5Z56">
    <property type="method" value="EM"/>
    <property type="resolution" value="5.10 A"/>
    <property type="chains" value="X=1-396"/>
</dbReference>
<dbReference type="PDB" id="5Z57">
    <property type="method" value="EM"/>
    <property type="resolution" value="6.50 A"/>
    <property type="chains" value="X=1-396"/>
</dbReference>
<dbReference type="PDB" id="5Z58">
    <property type="method" value="EM"/>
    <property type="resolution" value="4.90 A"/>
    <property type="chains" value="X=1-396"/>
</dbReference>
<dbReference type="PDB" id="6FF7">
    <property type="method" value="EM"/>
    <property type="resolution" value="4.50 A"/>
    <property type="chains" value="0=1-396"/>
</dbReference>
<dbReference type="PDB" id="7ABG">
    <property type="method" value="EM"/>
    <property type="resolution" value="7.80 A"/>
    <property type="chains" value="0=1-396"/>
</dbReference>
<dbReference type="PDB" id="7ABH">
    <property type="method" value="EM"/>
    <property type="resolution" value="4.50 A"/>
    <property type="chains" value="0=1-396"/>
</dbReference>
<dbReference type="PDB" id="7ABI">
    <property type="method" value="EM"/>
    <property type="resolution" value="8.00 A"/>
    <property type="chains" value="0=1-396"/>
</dbReference>
<dbReference type="PDB" id="7DVQ">
    <property type="method" value="EM"/>
    <property type="resolution" value="2.89 A"/>
    <property type="chains" value="X=1-396"/>
</dbReference>
<dbReference type="PDB" id="8I0P">
    <property type="method" value="EM"/>
    <property type="resolution" value="3.40 A"/>
    <property type="chains" value="X=1-396"/>
</dbReference>
<dbReference type="PDB" id="8I0R">
    <property type="method" value="EM"/>
    <property type="resolution" value="3.00 A"/>
    <property type="chains" value="X=1-396"/>
</dbReference>
<dbReference type="PDBsum" id="5Z56"/>
<dbReference type="PDBsum" id="5Z57"/>
<dbReference type="PDBsum" id="5Z58"/>
<dbReference type="PDBsum" id="6FF7"/>
<dbReference type="PDBsum" id="7ABG"/>
<dbReference type="PDBsum" id="7ABH"/>
<dbReference type="PDBsum" id="7ABI"/>
<dbReference type="PDBsum" id="7DVQ"/>
<dbReference type="PDBsum" id="8I0P"/>
<dbReference type="PDBsum" id="8I0R"/>
<dbReference type="EMDB" id="EMD-11695"/>
<dbReference type="EMDB" id="EMD-11696"/>
<dbReference type="EMDB" id="EMD-11697"/>
<dbReference type="EMDB" id="EMD-30875"/>
<dbReference type="EMDB" id="EMD-35105"/>
<dbReference type="EMDB" id="EMD-35107"/>
<dbReference type="EMDB" id="EMD-6889"/>
<dbReference type="EMDB" id="EMD-6890"/>
<dbReference type="EMDB" id="EMD-6891"/>
<dbReference type="SMR" id="Q8TAD8"/>
<dbReference type="BioGRID" id="122864">
    <property type="interactions" value="410"/>
</dbReference>
<dbReference type="ComplexPortal" id="CPX-2539">
    <property type="entry name" value="U2 small nuclear ribonucleoprotein complex"/>
</dbReference>
<dbReference type="ComplexPortal" id="CPX-2653">
    <property type="entry name" value="SNIP1/SkIP associated RNA-processing complex"/>
</dbReference>
<dbReference type="DIP" id="DIP-38956N"/>
<dbReference type="FunCoup" id="Q8TAD8">
    <property type="interactions" value="3338"/>
</dbReference>
<dbReference type="IntAct" id="Q8TAD8">
    <property type="interactions" value="147"/>
</dbReference>
<dbReference type="MINT" id="Q8TAD8"/>
<dbReference type="STRING" id="9606.ENSP00000296215"/>
<dbReference type="MoonDB" id="Q8TAD8">
    <property type="type" value="Predicted"/>
</dbReference>
<dbReference type="GlyGen" id="Q8TAD8">
    <property type="glycosylation" value="1 site, 1 O-linked glycan (1 site)"/>
</dbReference>
<dbReference type="iPTMnet" id="Q8TAD8"/>
<dbReference type="PhosphoSitePlus" id="Q8TAD8"/>
<dbReference type="BioMuta" id="SNIP1"/>
<dbReference type="DMDM" id="48428655"/>
<dbReference type="jPOST" id="Q8TAD8"/>
<dbReference type="MassIVE" id="Q8TAD8"/>
<dbReference type="PaxDb" id="9606-ENSP00000296215"/>
<dbReference type="PeptideAtlas" id="Q8TAD8"/>
<dbReference type="ProteomicsDB" id="73865"/>
<dbReference type="Pumba" id="Q8TAD8"/>
<dbReference type="Antibodypedia" id="17552">
    <property type="antibodies" value="177 antibodies from 26 providers"/>
</dbReference>
<dbReference type="DNASU" id="79753"/>
<dbReference type="Ensembl" id="ENST00000296215.8">
    <property type="protein sequence ID" value="ENSP00000296215.5"/>
    <property type="gene ID" value="ENSG00000163877.11"/>
</dbReference>
<dbReference type="GeneID" id="79753"/>
<dbReference type="KEGG" id="hsa:79753"/>
<dbReference type="MANE-Select" id="ENST00000296215.8">
    <property type="protein sequence ID" value="ENSP00000296215.5"/>
    <property type="RefSeq nucleotide sequence ID" value="NM_024700.4"/>
    <property type="RefSeq protein sequence ID" value="NP_078976.2"/>
</dbReference>
<dbReference type="UCSC" id="uc001cbi.5">
    <property type="organism name" value="human"/>
</dbReference>
<dbReference type="AGR" id="HGNC:30587"/>
<dbReference type="CTD" id="79753"/>
<dbReference type="DisGeNET" id="79753"/>
<dbReference type="GeneCards" id="SNIP1"/>
<dbReference type="HGNC" id="HGNC:30587">
    <property type="gene designation" value="SNIP1"/>
</dbReference>
<dbReference type="HPA" id="ENSG00000163877">
    <property type="expression patterns" value="Low tissue specificity"/>
</dbReference>
<dbReference type="MalaCards" id="SNIP1"/>
<dbReference type="MIM" id="608241">
    <property type="type" value="gene"/>
</dbReference>
<dbReference type="MIM" id="614501">
    <property type="type" value="phenotype"/>
</dbReference>
<dbReference type="neXtProt" id="NX_Q8TAD8"/>
<dbReference type="OpenTargets" id="ENSG00000163877"/>
<dbReference type="PharmGKB" id="PA142670893"/>
<dbReference type="VEuPathDB" id="HostDB:ENSG00000163877"/>
<dbReference type="eggNOG" id="KOG1882">
    <property type="taxonomic scope" value="Eukaryota"/>
</dbReference>
<dbReference type="GeneTree" id="ENSGT00940000156553"/>
<dbReference type="HOGENOM" id="CLU_022457_2_0_1"/>
<dbReference type="InParanoid" id="Q8TAD8"/>
<dbReference type="OMA" id="WQKSCWL"/>
<dbReference type="OrthoDB" id="444265at2759"/>
<dbReference type="PAN-GO" id="Q8TAD8">
    <property type="GO annotations" value="3 GO annotations based on evolutionary models"/>
</dbReference>
<dbReference type="PhylomeDB" id="Q8TAD8"/>
<dbReference type="TreeFam" id="TF312797"/>
<dbReference type="PathwayCommons" id="Q8TAD8"/>
<dbReference type="Reactome" id="R-HSA-72163">
    <property type="pathway name" value="mRNA Splicing - Major Pathway"/>
</dbReference>
<dbReference type="SignaLink" id="Q8TAD8"/>
<dbReference type="SIGNOR" id="Q8TAD8"/>
<dbReference type="BioGRID-ORCS" id="79753">
    <property type="hits" value="490 hits in 1168 CRISPR screens"/>
</dbReference>
<dbReference type="ChiTaRS" id="SNIP1">
    <property type="organism name" value="human"/>
</dbReference>
<dbReference type="GeneWiki" id="SNIP1"/>
<dbReference type="GenomeRNAi" id="79753"/>
<dbReference type="Pharos" id="Q8TAD8">
    <property type="development level" value="Tbio"/>
</dbReference>
<dbReference type="PRO" id="PR:Q8TAD8"/>
<dbReference type="Proteomes" id="UP000005640">
    <property type="component" value="Chromosome 1"/>
</dbReference>
<dbReference type="RNAct" id="Q8TAD8">
    <property type="molecule type" value="protein"/>
</dbReference>
<dbReference type="Bgee" id="ENSG00000163877">
    <property type="expression patterns" value="Expressed in secondary oocyte and 174 other cell types or tissues"/>
</dbReference>
<dbReference type="ExpressionAtlas" id="Q8TAD8">
    <property type="expression patterns" value="baseline and differential"/>
</dbReference>
<dbReference type="GO" id="GO:0005829">
    <property type="term" value="C:cytosol"/>
    <property type="evidence" value="ECO:0000314"/>
    <property type="project" value="HPA"/>
</dbReference>
<dbReference type="GO" id="GO:0005654">
    <property type="term" value="C:nucleoplasm"/>
    <property type="evidence" value="ECO:0000314"/>
    <property type="project" value="HPA"/>
</dbReference>
<dbReference type="GO" id="GO:0005634">
    <property type="term" value="C:nucleus"/>
    <property type="evidence" value="ECO:0000314"/>
    <property type="project" value="UniProtKB"/>
</dbReference>
<dbReference type="GO" id="GO:0005681">
    <property type="term" value="C:spliceosomal complex"/>
    <property type="evidence" value="ECO:0000303"/>
    <property type="project" value="ComplexPortal"/>
</dbReference>
<dbReference type="GO" id="GO:0005686">
    <property type="term" value="C:U2 snRNP"/>
    <property type="evidence" value="ECO:0000303"/>
    <property type="project" value="ComplexPortal"/>
</dbReference>
<dbReference type="GO" id="GO:0071005">
    <property type="term" value="C:U2-type precatalytic spliceosome"/>
    <property type="evidence" value="ECO:0000314"/>
    <property type="project" value="UniProtKB"/>
</dbReference>
<dbReference type="GO" id="GO:0003729">
    <property type="term" value="F:mRNA binding"/>
    <property type="evidence" value="ECO:0000318"/>
    <property type="project" value="GO_Central"/>
</dbReference>
<dbReference type="GO" id="GO:0003723">
    <property type="term" value="F:RNA binding"/>
    <property type="evidence" value="ECO:0007005"/>
    <property type="project" value="UniProtKB"/>
</dbReference>
<dbReference type="GO" id="GO:0140416">
    <property type="term" value="F:transcription regulator inhibitor activity"/>
    <property type="evidence" value="ECO:0007669"/>
    <property type="project" value="Ensembl"/>
</dbReference>
<dbReference type="GO" id="GO:0035196">
    <property type="term" value="P:miRNA processing"/>
    <property type="evidence" value="ECO:0000315"/>
    <property type="project" value="UniProtKB"/>
</dbReference>
<dbReference type="GO" id="GO:0000398">
    <property type="term" value="P:mRNA splicing, via spliceosome"/>
    <property type="evidence" value="ECO:0000314"/>
    <property type="project" value="UniProtKB"/>
</dbReference>
<dbReference type="GO" id="GO:0043124">
    <property type="term" value="P:negative regulation of canonical NF-kappaB signal transduction"/>
    <property type="evidence" value="ECO:0007669"/>
    <property type="project" value="Ensembl"/>
</dbReference>
<dbReference type="GO" id="GO:1903241">
    <property type="term" value="P:U2-type prespliceosome assembly"/>
    <property type="evidence" value="ECO:0000303"/>
    <property type="project" value="ComplexPortal"/>
</dbReference>
<dbReference type="CDD" id="cd22718">
    <property type="entry name" value="FHA_SNIP1"/>
    <property type="match status" value="1"/>
</dbReference>
<dbReference type="FunFam" id="2.60.200.20:FF:000008">
    <property type="entry name" value="smad nuclear-interacting protein 1"/>
    <property type="match status" value="1"/>
</dbReference>
<dbReference type="Gene3D" id="2.60.200.20">
    <property type="match status" value="1"/>
</dbReference>
<dbReference type="InterPro" id="IPR050923">
    <property type="entry name" value="Cell_Proc_Reg/RNA_Proc"/>
</dbReference>
<dbReference type="InterPro" id="IPR000253">
    <property type="entry name" value="FHA_dom"/>
</dbReference>
<dbReference type="InterPro" id="IPR008984">
    <property type="entry name" value="SMAD_FHA_dom_sf"/>
</dbReference>
<dbReference type="PANTHER" id="PTHR23308">
    <property type="entry name" value="NUCLEAR INHIBITOR OF PROTEIN PHOSPHATASE-1"/>
    <property type="match status" value="1"/>
</dbReference>
<dbReference type="Pfam" id="PF00498">
    <property type="entry name" value="FHA"/>
    <property type="match status" value="1"/>
</dbReference>
<dbReference type="SMART" id="SM00240">
    <property type="entry name" value="FHA"/>
    <property type="match status" value="1"/>
</dbReference>
<dbReference type="SUPFAM" id="SSF49879">
    <property type="entry name" value="SMAD/FHA domain"/>
    <property type="match status" value="1"/>
</dbReference>
<dbReference type="PROSITE" id="PS50006">
    <property type="entry name" value="FHA_DOMAIN"/>
    <property type="match status" value="1"/>
</dbReference>
<organism>
    <name type="scientific">Homo sapiens</name>
    <name type="common">Human</name>
    <dbReference type="NCBI Taxonomy" id="9606"/>
    <lineage>
        <taxon>Eukaryota</taxon>
        <taxon>Metazoa</taxon>
        <taxon>Chordata</taxon>
        <taxon>Craniata</taxon>
        <taxon>Vertebrata</taxon>
        <taxon>Euteleostomi</taxon>
        <taxon>Mammalia</taxon>
        <taxon>Eutheria</taxon>
        <taxon>Euarchontoglires</taxon>
        <taxon>Primates</taxon>
        <taxon>Haplorrhini</taxon>
        <taxon>Catarrhini</taxon>
        <taxon>Hominidae</taxon>
        <taxon>Homo</taxon>
    </lineage>
</organism>
<keyword id="KW-0002">3D-structure</keyword>
<keyword id="KW-0175">Coiled coil</keyword>
<keyword id="KW-0225">Disease variant</keyword>
<keyword id="KW-0887">Epilepsy</keyword>
<keyword id="KW-1017">Isopeptide bond</keyword>
<keyword id="KW-0507">mRNA processing</keyword>
<keyword id="KW-0508">mRNA splicing</keyword>
<keyword id="KW-0539">Nucleus</keyword>
<keyword id="KW-0597">Phosphoprotein</keyword>
<keyword id="KW-1267">Proteomics identification</keyword>
<keyword id="KW-1185">Reference proteome</keyword>
<keyword id="KW-0943">RNA-mediated gene silencing</keyword>
<keyword id="KW-0747">Spliceosome</keyword>
<keyword id="KW-0832">Ubl conjugation</keyword>
<feature type="chain" id="PRO_0000072009" description="Smad nuclear-interacting protein 1">
    <location>
        <begin position="1"/>
        <end position="396"/>
    </location>
</feature>
<feature type="domain" description="FHA" evidence="3">
    <location>
        <begin position="281"/>
        <end position="344"/>
    </location>
</feature>
<feature type="region of interest" description="Disordered" evidence="4">
    <location>
        <begin position="1"/>
        <end position="227"/>
    </location>
</feature>
<feature type="region of interest" description="Disordered" evidence="4">
    <location>
        <begin position="373"/>
        <end position="396"/>
    </location>
</feature>
<feature type="coiled-coil region" evidence="2">
    <location>
        <begin position="165"/>
        <end position="196"/>
    </location>
</feature>
<feature type="compositionally biased region" description="Basic and acidic residues" evidence="4">
    <location>
        <begin position="1"/>
        <end position="10"/>
    </location>
</feature>
<feature type="compositionally biased region" description="Basic residues" evidence="4">
    <location>
        <begin position="77"/>
        <end position="105"/>
    </location>
</feature>
<feature type="compositionally biased region" description="Basic and acidic residues" evidence="4">
    <location>
        <begin position="107"/>
        <end position="142"/>
    </location>
</feature>
<feature type="compositionally biased region" description="Basic and acidic residues" evidence="4">
    <location>
        <begin position="213"/>
        <end position="225"/>
    </location>
</feature>
<feature type="compositionally biased region" description="Basic and acidic residues" evidence="4">
    <location>
        <begin position="373"/>
        <end position="382"/>
    </location>
</feature>
<feature type="compositionally biased region" description="Acidic residues" evidence="4">
    <location>
        <begin position="383"/>
        <end position="396"/>
    </location>
</feature>
<feature type="modified residue" description="Phosphoserine" evidence="21 24 25 26">
    <location>
        <position position="35"/>
    </location>
</feature>
<feature type="modified residue" description="Phosphoserine" evidence="22">
    <location>
        <position position="49"/>
    </location>
</feature>
<feature type="modified residue" description="Phosphoserine" evidence="22 23 26 27">
    <location>
        <position position="52"/>
    </location>
</feature>
<feature type="modified residue" description="Phosphoserine" evidence="22 25 26 27">
    <location>
        <position position="54"/>
    </location>
</feature>
<feature type="modified residue" description="Phosphothreonine" evidence="26">
    <location>
        <position position="57"/>
    </location>
</feature>
<feature type="modified residue" description="Phosphoserine" evidence="26">
    <location>
        <position position="58"/>
    </location>
</feature>
<feature type="modified residue" description="Phosphoserine" evidence="1">
    <location>
        <position position="99"/>
    </location>
</feature>
<feature type="modified residue" description="Phosphoserine" evidence="1">
    <location>
        <position position="153"/>
    </location>
</feature>
<feature type="modified residue" description="Phosphoserine" evidence="26">
    <location>
        <position position="202"/>
    </location>
</feature>
<feature type="modified residue" description="Phosphoserine" evidence="24">
    <location>
        <position position="394"/>
    </location>
</feature>
<feature type="cross-link" description="Glycyl lysine isopeptide (Lys-Gly) (interchain with G-Cter in SUMO); alternate">
    <location>
        <position position="30"/>
    </location>
</feature>
<feature type="cross-link" description="Glycyl lysine isopeptide (Lys-Gly) (interchain with G-Cter in SUMO1); alternate" evidence="28">
    <location>
        <position position="30"/>
    </location>
</feature>
<feature type="cross-link" description="Glycyl lysine isopeptide (Lys-Gly) (interchain with G-Cter in SUMO2); alternate" evidence="28 29 30 31 32">
    <location>
        <position position="30"/>
    </location>
</feature>
<feature type="cross-link" description="Glycyl lysine isopeptide (Lys-Gly) (interchain with G-Cter in SUMO2)" evidence="30 31 32">
    <location>
        <position position="108"/>
    </location>
</feature>
<feature type="cross-link" description="Glycyl lysine isopeptide (Lys-Gly) (interchain with G-Cter in SUMO2)" evidence="32">
    <location>
        <position position="223"/>
    </location>
</feature>
<feature type="sequence variant" id="VAR_067542" description="In NEDHCS; dbSNP:rs387906986." evidence="12">
    <original>E</original>
    <variation>G</variation>
    <location>
        <position position="366"/>
    </location>
</feature>
<feature type="mutagenesis site" description="Abolishes sumoylation." evidence="9">
    <original>K</original>
    <variation>R</variation>
    <location>
        <position position="30"/>
    </location>
</feature>
<feature type="sequence conflict" description="In Ref. 2; BAB55241." evidence="15" ref="2">
    <original>F</original>
    <variation>S</variation>
    <location>
        <position position="181"/>
    </location>
</feature>
<feature type="sequence conflict" description="In Ref. 2; BAB14134." evidence="15" ref="2">
    <original>S</original>
    <variation>I</variation>
    <location>
        <position position="364"/>
    </location>
</feature>
<feature type="helix" evidence="33">
    <location>
        <begin position="230"/>
        <end position="233"/>
    </location>
</feature>
<feature type="turn" evidence="33">
    <location>
        <begin position="234"/>
        <end position="236"/>
    </location>
</feature>
<feature type="strand" evidence="33">
    <location>
        <begin position="240"/>
        <end position="243"/>
    </location>
</feature>
<feature type="strand" evidence="33">
    <location>
        <begin position="259"/>
        <end position="265"/>
    </location>
</feature>
<feature type="strand" evidence="33">
    <location>
        <begin position="278"/>
        <end position="285"/>
    </location>
</feature>
<feature type="turn" evidence="33">
    <location>
        <begin position="287"/>
        <end position="289"/>
    </location>
</feature>
<feature type="strand" evidence="33">
    <location>
        <begin position="304"/>
        <end position="314"/>
    </location>
</feature>
<feature type="strand" evidence="33">
    <location>
        <begin position="320"/>
        <end position="330"/>
    </location>
</feature>
<feature type="strand" evidence="33">
    <location>
        <begin position="337"/>
        <end position="339"/>
    </location>
</feature>
<feature type="strand" evidence="33">
    <location>
        <begin position="357"/>
        <end position="360"/>
    </location>
</feature>
<feature type="strand" evidence="33">
    <location>
        <begin position="366"/>
        <end position="371"/>
    </location>
</feature>
<sequence length="396" mass="45778">MKAVKSERERGSRRRHRDGDVVLPAGVVVKQERLSPEVAPPAHRRPDHSGGSPSPPTSEPARSGHRGNRARGVSRSPPKKKNKASGRRSKSPRSKRNRSPHHSTVKVKQEREDHPRRGREDRQHREPSEQEHRRARNSDRDRHRGHSHQRRTSNERPGSGQGQGRDRDTQNLQAQEEEREFYNARRREHRQRNDVGGGGSESQELVPRPGGNNKEKEVPAKEKPSFELSGALLEDTNTFRGVVIKYSEPPEARIPKKRWRLYPFKNDEVLPVMYIHRQSAYLLGRHRRIADIPIDHPSCSKQHAVFQYRLVEYTRADGTVGRRVKPYIIDLGSGNGTFLNNKRIEPQRYYELKEKDVLKFGFSSREYVLLHESSDTSEIDRKDDEDEEEEEEVSDS</sequence>
<name>SNIP1_HUMAN</name>
<gene>
    <name type="primary">SNIP1</name>
</gene>
<protein>
    <recommendedName>
        <fullName>Smad nuclear-interacting protein 1</fullName>
    </recommendedName>
    <alternativeName>
        <fullName>FHA domain-containing protein SNIP1</fullName>
    </alternativeName>
</protein>
<accession>Q8TAD8</accession>
<accession>Q96SP9</accession>
<accession>Q9H9T7</accession>
<reference key="1">
    <citation type="journal article" date="2000" name="Genes Dev.">
        <title>A novel Smad nuclear interacting protein, SNIP1, suppresses p300-dependent TGF-beta signal transduction.</title>
        <authorList>
            <person name="Kim R.H."/>
            <person name="Wang D."/>
            <person name="Tsang M."/>
            <person name="Martin J."/>
            <person name="Huff C."/>
            <person name="de Caestecker M.P."/>
            <person name="Parks T.W."/>
            <person name="Meng X."/>
            <person name="Lechleider R.J."/>
            <person name="Wang T."/>
            <person name="Roberts A.B."/>
        </authorList>
    </citation>
    <scope>NUCLEOTIDE SEQUENCE [MRNA]</scope>
    <scope>INTERACTION WITH SMAD4 AND CREBBP/EP300</scope>
    <scope>SUBCELLULAR LOCATION</scope>
    <scope>TISSUE SPECIFICITY</scope>
    <source>
        <tissue>Embryonic kidney</tissue>
    </source>
</reference>
<reference key="2">
    <citation type="journal article" date="2004" name="Nat. Genet.">
        <title>Complete sequencing and characterization of 21,243 full-length human cDNAs.</title>
        <authorList>
            <person name="Ota T."/>
            <person name="Suzuki Y."/>
            <person name="Nishikawa T."/>
            <person name="Otsuki T."/>
            <person name="Sugiyama T."/>
            <person name="Irie R."/>
            <person name="Wakamatsu A."/>
            <person name="Hayashi K."/>
            <person name="Sato H."/>
            <person name="Nagai K."/>
            <person name="Kimura K."/>
            <person name="Makita H."/>
            <person name="Sekine M."/>
            <person name="Obayashi M."/>
            <person name="Nishi T."/>
            <person name="Shibahara T."/>
            <person name="Tanaka T."/>
            <person name="Ishii S."/>
            <person name="Yamamoto J."/>
            <person name="Saito K."/>
            <person name="Kawai Y."/>
            <person name="Isono Y."/>
            <person name="Nakamura Y."/>
            <person name="Nagahari K."/>
            <person name="Murakami K."/>
            <person name="Yasuda T."/>
            <person name="Iwayanagi T."/>
            <person name="Wagatsuma M."/>
            <person name="Shiratori A."/>
            <person name="Sudo H."/>
            <person name="Hosoiri T."/>
            <person name="Kaku Y."/>
            <person name="Kodaira H."/>
            <person name="Kondo H."/>
            <person name="Sugawara M."/>
            <person name="Takahashi M."/>
            <person name="Kanda K."/>
            <person name="Yokoi T."/>
            <person name="Furuya T."/>
            <person name="Kikkawa E."/>
            <person name="Omura Y."/>
            <person name="Abe K."/>
            <person name="Kamihara K."/>
            <person name="Katsuta N."/>
            <person name="Sato K."/>
            <person name="Tanikawa M."/>
            <person name="Yamazaki M."/>
            <person name="Ninomiya K."/>
            <person name="Ishibashi T."/>
            <person name="Yamashita H."/>
            <person name="Murakawa K."/>
            <person name="Fujimori K."/>
            <person name="Tanai H."/>
            <person name="Kimata M."/>
            <person name="Watanabe M."/>
            <person name="Hiraoka S."/>
            <person name="Chiba Y."/>
            <person name="Ishida S."/>
            <person name="Ono Y."/>
            <person name="Takiguchi S."/>
            <person name="Watanabe S."/>
            <person name="Yosida M."/>
            <person name="Hotuta T."/>
            <person name="Kusano J."/>
            <person name="Kanehori K."/>
            <person name="Takahashi-Fujii A."/>
            <person name="Hara H."/>
            <person name="Tanase T.-O."/>
            <person name="Nomura Y."/>
            <person name="Togiya S."/>
            <person name="Komai F."/>
            <person name="Hara R."/>
            <person name="Takeuchi K."/>
            <person name="Arita M."/>
            <person name="Imose N."/>
            <person name="Musashino K."/>
            <person name="Yuuki H."/>
            <person name="Oshima A."/>
            <person name="Sasaki N."/>
            <person name="Aotsuka S."/>
            <person name="Yoshikawa Y."/>
            <person name="Matsunawa H."/>
            <person name="Ichihara T."/>
            <person name="Shiohata N."/>
            <person name="Sano S."/>
            <person name="Moriya S."/>
            <person name="Momiyama H."/>
            <person name="Satoh N."/>
            <person name="Takami S."/>
            <person name="Terashima Y."/>
            <person name="Suzuki O."/>
            <person name="Nakagawa S."/>
            <person name="Senoh A."/>
            <person name="Mizoguchi H."/>
            <person name="Goto Y."/>
            <person name="Shimizu F."/>
            <person name="Wakebe H."/>
            <person name="Hishigaki H."/>
            <person name="Watanabe T."/>
            <person name="Sugiyama A."/>
            <person name="Takemoto M."/>
            <person name="Kawakami B."/>
            <person name="Yamazaki M."/>
            <person name="Watanabe K."/>
            <person name="Kumagai A."/>
            <person name="Itakura S."/>
            <person name="Fukuzumi Y."/>
            <person name="Fujimori Y."/>
            <person name="Komiyama M."/>
            <person name="Tashiro H."/>
            <person name="Tanigami A."/>
            <person name="Fujiwara T."/>
            <person name="Ono T."/>
            <person name="Yamada K."/>
            <person name="Fujii Y."/>
            <person name="Ozaki K."/>
            <person name="Hirao M."/>
            <person name="Ohmori Y."/>
            <person name="Kawabata A."/>
            <person name="Hikiji T."/>
            <person name="Kobatake N."/>
            <person name="Inagaki H."/>
            <person name="Ikema Y."/>
            <person name="Okamoto S."/>
            <person name="Okitani R."/>
            <person name="Kawakami T."/>
            <person name="Noguchi S."/>
            <person name="Itoh T."/>
            <person name="Shigeta K."/>
            <person name="Senba T."/>
            <person name="Matsumura K."/>
            <person name="Nakajima Y."/>
            <person name="Mizuno T."/>
            <person name="Morinaga M."/>
            <person name="Sasaki M."/>
            <person name="Togashi T."/>
            <person name="Oyama M."/>
            <person name="Hata H."/>
            <person name="Watanabe M."/>
            <person name="Komatsu T."/>
            <person name="Mizushima-Sugano J."/>
            <person name="Satoh T."/>
            <person name="Shirai Y."/>
            <person name="Takahashi Y."/>
            <person name="Nakagawa K."/>
            <person name="Okumura K."/>
            <person name="Nagase T."/>
            <person name="Nomura N."/>
            <person name="Kikuchi H."/>
            <person name="Masuho Y."/>
            <person name="Yamashita R."/>
            <person name="Nakai K."/>
            <person name="Yada T."/>
            <person name="Nakamura Y."/>
            <person name="Ohara O."/>
            <person name="Isogai T."/>
            <person name="Sugano S."/>
        </authorList>
    </citation>
    <scope>NUCLEOTIDE SEQUENCE [LARGE SCALE MRNA]</scope>
    <source>
        <tissue>Teratocarcinoma</tissue>
    </source>
</reference>
<reference key="3">
    <citation type="journal article" date="2004" name="Genome Res.">
        <title>The status, quality, and expansion of the NIH full-length cDNA project: the Mammalian Gene Collection (MGC).</title>
        <authorList>
            <consortium name="The MGC Project Team"/>
        </authorList>
    </citation>
    <scope>NUCLEOTIDE SEQUENCE [LARGE SCALE MRNA]</scope>
    <source>
        <tissue>Testis</tissue>
    </source>
</reference>
<reference key="4">
    <citation type="journal article" date="2001" name="J. Biol. Chem.">
        <title>SNIP1 inhibits NF-kappa B signaling by competing for its binding to the C/H1 domain of CBP/p300 transcriptional co-activators.</title>
        <authorList>
            <person name="Kim R.H."/>
            <person name="Flanders K.C."/>
            <person name="Birkey Reffey S."/>
            <person name="Anderson L.A."/>
            <person name="Duckett C.S."/>
            <person name="Perkins N.D."/>
            <person name="Roberts A.B."/>
        </authorList>
    </citation>
    <scope>FUNCTION</scope>
    <scope>INTERACTION WITH CREBBP AND EP300</scope>
</reference>
<reference key="5">
    <citation type="journal article" date="2002" name="BMC Cell Biol.">
        <title>A novel link between the proteasome pathway and the signal transduction pathway of the bone morphogenetic proteins (BMPs).</title>
        <authorList>
            <person name="Lin Y."/>
            <person name="Martin J."/>
            <person name="Gruendler C."/>
            <person name="Farley J."/>
            <person name="Meng X."/>
            <person name="Li B.-Y."/>
            <person name="Lechleider R."/>
            <person name="Huff C."/>
            <person name="Kim R.H."/>
            <person name="Grasser W.A."/>
            <person name="Paralkar V."/>
            <person name="Wang T."/>
        </authorList>
    </citation>
    <scope>INTERACTION WITH THE SMAD1/OAZ1/PSMB4 COMPLEX</scope>
    <scope>DEGRADATION BY THE PROTEASOME</scope>
</reference>
<reference key="6">
    <citation type="journal article" date="2004" name="Oncogene">
        <title>The FHA domain protein SNIP1 is a regulator of the cell cycle and cyclin D1 expression.</title>
        <authorList>
            <person name="Roche K.C."/>
            <person name="Wiechens N."/>
            <person name="Owen-Hughes T."/>
            <person name="Perkins N.D."/>
        </authorList>
    </citation>
    <scope>FUNCTION</scope>
    <scope>INTERACTION WITH SMARCA4</scope>
</reference>
<reference key="7">
    <citation type="journal article" date="2006" name="Cell">
        <title>Global, in vivo, and site-specific phosphorylation dynamics in signaling networks.</title>
        <authorList>
            <person name="Olsen J.V."/>
            <person name="Blagoev B."/>
            <person name="Gnad F."/>
            <person name="Macek B."/>
            <person name="Kumar C."/>
            <person name="Mortensen P."/>
            <person name="Mann M."/>
        </authorList>
    </citation>
    <scope>PHOSPHORYLATION [LARGE SCALE ANALYSIS] AT SER-35</scope>
    <scope>IDENTIFICATION BY MASS SPECTROMETRY [LARGE SCALE ANALYSIS]</scope>
    <source>
        <tissue>Cervix carcinoma</tissue>
    </source>
</reference>
<reference key="8">
    <citation type="journal article" date="2006" name="Proc. Natl. Acad. Sci. U.S.A.">
        <title>PDSM, a motif for phosphorylation-dependent SUMO modification.</title>
        <authorList>
            <person name="Hietakangas V."/>
            <person name="Anckar J."/>
            <person name="Blomster H.A."/>
            <person name="Fujimoto M."/>
            <person name="Palvimo J.J."/>
            <person name="Nakai A."/>
            <person name="Sistonen L."/>
        </authorList>
    </citation>
    <scope>SUMOYLATION AT LYS-30</scope>
    <scope>MUTAGENESIS OF LYS-30</scope>
</reference>
<reference key="9">
    <citation type="journal article" date="2008" name="Cancer Res.">
        <title>Regulation of cyclin D1 RNA stability by SNIP1.</title>
        <authorList>
            <person name="Bracken C.P."/>
            <person name="Wall S.J."/>
            <person name="Barre B."/>
            <person name="Panov K.I."/>
            <person name="Ajuh P.M."/>
            <person name="Perkins N.D."/>
        </authorList>
    </citation>
    <scope>FUNCTION</scope>
    <scope>IDENTIFICATION IN THE SNARP COMPLEX</scope>
</reference>
<reference key="10">
    <citation type="journal article" date="2008" name="Proc. Natl. Acad. Sci. U.S.A.">
        <title>The FHA domain proteins DAWDLE in Arabidopsis and SNIP1 in humans act in small RNA biogenesis.</title>
        <authorList>
            <person name="Yu B."/>
            <person name="Bi L."/>
            <person name="Zheng B."/>
            <person name="Ji L."/>
            <person name="Chevalier D."/>
            <person name="Agarwal M."/>
            <person name="Ramachandran V."/>
            <person name="Li W."/>
            <person name="Lagrange T."/>
            <person name="Walker J.C."/>
            <person name="Chen X."/>
        </authorList>
    </citation>
    <scope>FUNCTION</scope>
    <scope>INTERACTION WITH DROSHA</scope>
</reference>
<reference key="11">
    <citation type="journal article" date="2008" name="Proc. Natl. Acad. Sci. U.S.A.">
        <title>A quantitative atlas of mitotic phosphorylation.</title>
        <authorList>
            <person name="Dephoure N."/>
            <person name="Zhou C."/>
            <person name="Villen J."/>
            <person name="Beausoleil S.A."/>
            <person name="Bakalarski C.E."/>
            <person name="Elledge S.J."/>
            <person name="Gygi S.P."/>
        </authorList>
    </citation>
    <scope>PHOSPHORYLATION [LARGE SCALE ANALYSIS] AT SER-49; SER-52 AND SER-54</scope>
    <scope>IDENTIFICATION BY MASS SPECTROMETRY [LARGE SCALE ANALYSIS]</scope>
    <source>
        <tissue>Cervix carcinoma</tissue>
    </source>
</reference>
<reference key="12">
    <citation type="journal article" date="2009" name="Sci. Signal.">
        <title>Quantitative phosphoproteomic analysis of T cell receptor signaling reveals system-wide modulation of protein-protein interactions.</title>
        <authorList>
            <person name="Mayya V."/>
            <person name="Lundgren D.H."/>
            <person name="Hwang S.-I."/>
            <person name="Rezaul K."/>
            <person name="Wu L."/>
            <person name="Eng J.K."/>
            <person name="Rodionov V."/>
            <person name="Han D.K."/>
        </authorList>
    </citation>
    <scope>PHOSPHORYLATION [LARGE SCALE ANALYSIS] AT SER-52</scope>
    <scope>IDENTIFICATION BY MASS SPECTROMETRY [LARGE SCALE ANALYSIS]</scope>
    <source>
        <tissue>Leukemic T-cell</tissue>
    </source>
</reference>
<reference key="13">
    <citation type="journal article" date="2010" name="Sci. Signal.">
        <title>Quantitative phosphoproteomics reveals widespread full phosphorylation site occupancy during mitosis.</title>
        <authorList>
            <person name="Olsen J.V."/>
            <person name="Vermeulen M."/>
            <person name="Santamaria A."/>
            <person name="Kumar C."/>
            <person name="Miller M.L."/>
            <person name="Jensen L.J."/>
            <person name="Gnad F."/>
            <person name="Cox J."/>
            <person name="Jensen T.S."/>
            <person name="Nigg E.A."/>
            <person name="Brunak S."/>
            <person name="Mann M."/>
        </authorList>
    </citation>
    <scope>PHOSPHORYLATION [LARGE SCALE ANALYSIS] AT SER-35 AND SER-394</scope>
    <scope>IDENTIFICATION BY MASS SPECTROMETRY [LARGE SCALE ANALYSIS]</scope>
    <source>
        <tissue>Cervix carcinoma</tissue>
    </source>
</reference>
<reference key="14">
    <citation type="journal article" date="2011" name="Sci. Signal.">
        <title>System-wide temporal characterization of the proteome and phosphoproteome of human embryonic stem cell differentiation.</title>
        <authorList>
            <person name="Rigbolt K.T."/>
            <person name="Prokhorova T.A."/>
            <person name="Akimov V."/>
            <person name="Henningsen J."/>
            <person name="Johansen P.T."/>
            <person name="Kratchmarova I."/>
            <person name="Kassem M."/>
            <person name="Mann M."/>
            <person name="Olsen J.V."/>
            <person name="Blagoev B."/>
        </authorList>
    </citation>
    <scope>PHOSPHORYLATION [LARGE SCALE ANALYSIS] AT SER-35 AND SER-54</scope>
    <scope>IDENTIFICATION BY MASS SPECTROMETRY [LARGE SCALE ANALYSIS]</scope>
</reference>
<reference key="15">
    <citation type="journal article" date="2012" name="Proc. Natl. Acad. Sci. U.S.A.">
        <title>N-terminal acetylome analyses and functional insights of the N-terminal acetyltransferase NatB.</title>
        <authorList>
            <person name="Van Damme P."/>
            <person name="Lasa M."/>
            <person name="Polevoda B."/>
            <person name="Gazquez C."/>
            <person name="Elosegui-Artola A."/>
            <person name="Kim D.S."/>
            <person name="De Juan-Pardo E."/>
            <person name="Demeyer K."/>
            <person name="Hole K."/>
            <person name="Larrea E."/>
            <person name="Timmerman E."/>
            <person name="Prieto J."/>
            <person name="Arnesen T."/>
            <person name="Sherman F."/>
            <person name="Gevaert K."/>
            <person name="Aldabe R."/>
        </authorList>
    </citation>
    <scope>IDENTIFICATION BY MASS SPECTROMETRY [LARGE SCALE ANALYSIS]</scope>
</reference>
<reference key="16">
    <citation type="journal article" date="2013" name="J. Proteome Res.">
        <title>Toward a comprehensive characterization of a human cancer cell phosphoproteome.</title>
        <authorList>
            <person name="Zhou H."/>
            <person name="Di Palma S."/>
            <person name="Preisinger C."/>
            <person name="Peng M."/>
            <person name="Polat A.N."/>
            <person name="Heck A.J."/>
            <person name="Mohammed S."/>
        </authorList>
    </citation>
    <scope>PHOSPHORYLATION [LARGE SCALE ANALYSIS] AT SER-35; SER-52; SER-54; THR-57; SER-58 AND SER-202</scope>
    <scope>IDENTIFICATION BY MASS SPECTROMETRY [LARGE SCALE ANALYSIS]</scope>
    <source>
        <tissue>Cervix carcinoma</tissue>
        <tissue>Erythroleukemia</tissue>
    </source>
</reference>
<reference key="17">
    <citation type="journal article" date="2014" name="J. Proteomics">
        <title>An enzyme assisted RP-RPLC approach for in-depth analysis of human liver phosphoproteome.</title>
        <authorList>
            <person name="Bian Y."/>
            <person name="Song C."/>
            <person name="Cheng K."/>
            <person name="Dong M."/>
            <person name="Wang F."/>
            <person name="Huang J."/>
            <person name="Sun D."/>
            <person name="Wang L."/>
            <person name="Ye M."/>
            <person name="Zou H."/>
        </authorList>
    </citation>
    <scope>PHOSPHORYLATION [LARGE SCALE ANALYSIS] AT SER-52 AND SER-54</scope>
    <scope>IDENTIFICATION BY MASS SPECTROMETRY [LARGE SCALE ANALYSIS]</scope>
    <source>
        <tissue>Liver</tissue>
    </source>
</reference>
<reference key="18">
    <citation type="journal article" date="2014" name="Nat. Struct. Mol. Biol.">
        <title>Uncovering global SUMOylation signaling networks in a site-specific manner.</title>
        <authorList>
            <person name="Hendriks I.A."/>
            <person name="D'Souza R.C."/>
            <person name="Yang B."/>
            <person name="Verlaan-de Vries M."/>
            <person name="Mann M."/>
            <person name="Vertegaal A.C."/>
        </authorList>
    </citation>
    <scope>SUMOYLATION [LARGE SCALE ANALYSIS] AT LYS-30</scope>
    <scope>IDENTIFICATION BY MASS SPECTROMETRY [LARGE SCALE ANALYSIS]</scope>
</reference>
<reference key="19">
    <citation type="journal article" date="2014" name="Proc. Natl. Acad. Sci. U.S.A.">
        <title>Mapping of SUMO sites and analysis of SUMOylation changes induced by external stimuli.</title>
        <authorList>
            <person name="Impens F."/>
            <person name="Radoshevich L."/>
            <person name="Cossart P."/>
            <person name="Ribet D."/>
        </authorList>
    </citation>
    <scope>SUMOYLATION [LARGE SCALE ANALYSIS] AT LYS-30</scope>
    <scope>IDENTIFICATION BY MASS SPECTROMETRY [LARGE SCALE ANALYSIS]</scope>
</reference>
<reference key="20">
    <citation type="journal article" date="2015" name="Cell Rep.">
        <title>SUMO-2 orchestrates chromatin modifiers in response to DNA damage.</title>
        <authorList>
            <person name="Hendriks I.A."/>
            <person name="Treffers L.W."/>
            <person name="Verlaan-de Vries M."/>
            <person name="Olsen J.V."/>
            <person name="Vertegaal A.C."/>
        </authorList>
    </citation>
    <scope>SUMOYLATION [LARGE SCALE ANALYSIS] AT LYS-30 AND LYS-108</scope>
    <scope>IDENTIFICATION BY MASS SPECTROMETRY [LARGE SCALE ANALYSIS]</scope>
</reference>
<reference key="21">
    <citation type="journal article" date="2015" name="Mol. Cell. Proteomics">
        <title>System-wide analysis of SUMOylation dynamics in response to replication stress reveals novel small ubiquitin-like modified target proteins and acceptor lysines relevant for genome stability.</title>
        <authorList>
            <person name="Xiao Z."/>
            <person name="Chang J.G."/>
            <person name="Hendriks I.A."/>
            <person name="Sigurdsson J.O."/>
            <person name="Olsen J.V."/>
            <person name="Vertegaal A.C."/>
        </authorList>
    </citation>
    <scope>SUMOYLATION [LARGE SCALE ANALYSIS] AT LYS-30 AND LYS-108</scope>
    <scope>IDENTIFICATION BY MASS SPECTROMETRY [LARGE SCALE ANALYSIS]</scope>
</reference>
<reference key="22">
    <citation type="journal article" date="2017" name="Nat. Struct. Mol. Biol.">
        <title>Site-specific mapping of the human SUMO proteome reveals co-modification with phosphorylation.</title>
        <authorList>
            <person name="Hendriks I.A."/>
            <person name="Lyon D."/>
            <person name="Young C."/>
            <person name="Jensen L.J."/>
            <person name="Vertegaal A.C."/>
            <person name="Nielsen M.L."/>
        </authorList>
    </citation>
    <scope>SUMOYLATION [LARGE SCALE ANALYSIS] AT LYS-30; LYS-108 AND LYS-223</scope>
    <scope>IDENTIFICATION BY MASS SPECTROMETRY [LARGE SCALE ANALYSIS]</scope>
</reference>
<reference evidence="17 18 19" key="23">
    <citation type="journal article" date="2018" name="Cell Res.">
        <title>Structure of the human activated spliceosome in three conformational states.</title>
        <authorList>
            <person name="Zhang X."/>
            <person name="Yan C."/>
            <person name="Zhan X."/>
            <person name="Li L."/>
            <person name="Lei J."/>
            <person name="Shi Y."/>
        </authorList>
    </citation>
    <scope>STRUCTURE BY ELECTRON MICROSCOPY (4.90 ANGSTROMS)</scope>
    <scope>FUNCTION</scope>
    <scope>SUBCELLULAR LOCATION</scope>
    <scope>SUBUNIT</scope>
</reference>
<reference evidence="20" key="24">
    <citation type="journal article" date="2021" name="Science">
        <title>Structure of the activated human minor spliceosome.</title>
        <authorList>
            <person name="Bai R."/>
            <person name="Wan R."/>
            <person name="Wang L."/>
            <person name="Xu K."/>
            <person name="Zhang Q."/>
            <person name="Lei J."/>
            <person name="Shi Y."/>
        </authorList>
    </citation>
    <scope>STRUCTURE BY ELECTRON MICROSCOPY (2.89 ANGSTROMS)</scope>
    <scope>SUBUNIT</scope>
</reference>
<reference key="25">
    <citation type="journal article" date="2012" name="PLoS ONE">
        <title>Genetic mapping and exome sequencing identify variants associated with five novel diseases.</title>
        <authorList>
            <person name="Puffenberger E.G."/>
            <person name="Jinks R.N."/>
            <person name="Sougnez C."/>
            <person name="Cibulskis K."/>
            <person name="Willert R.A."/>
            <person name="Achilly N.P."/>
            <person name="Cassidy R.P."/>
            <person name="Fiorentini C.J."/>
            <person name="Heiken K.F."/>
            <person name="Lawrence J.J."/>
            <person name="Mahoney M.H."/>
            <person name="Miller C.J."/>
            <person name="Nair D.T."/>
            <person name="Politi K.A."/>
            <person name="Worcester K.N."/>
            <person name="Setton R.A."/>
            <person name="Dipiazza R."/>
            <person name="Sherman E.A."/>
            <person name="Eastman J.T."/>
            <person name="Francklyn C."/>
            <person name="Robey-Bond S."/>
            <person name="Rider N.L."/>
            <person name="Gabriel S."/>
            <person name="Morton D.H."/>
            <person name="Strauss K.A."/>
        </authorList>
    </citation>
    <scope>VARIANT NEDHCS GLY-366</scope>
</reference>
<proteinExistence type="evidence at protein level"/>
<evidence type="ECO:0000250" key="1">
    <source>
        <dbReference type="UniProtKB" id="Q5M9G6"/>
    </source>
</evidence>
<evidence type="ECO:0000255" key="2"/>
<evidence type="ECO:0000255" key="3">
    <source>
        <dbReference type="PROSITE-ProRule" id="PRU00086"/>
    </source>
</evidence>
<evidence type="ECO:0000256" key="4">
    <source>
        <dbReference type="SAM" id="MobiDB-lite"/>
    </source>
</evidence>
<evidence type="ECO:0000269" key="5">
    <source>
    </source>
</evidence>
<evidence type="ECO:0000269" key="6">
    <source>
    </source>
</evidence>
<evidence type="ECO:0000269" key="7">
    <source>
    </source>
</evidence>
<evidence type="ECO:0000269" key="8">
    <source>
    </source>
</evidence>
<evidence type="ECO:0000269" key="9">
    <source>
    </source>
</evidence>
<evidence type="ECO:0000269" key="10">
    <source>
    </source>
</evidence>
<evidence type="ECO:0000269" key="11">
    <source>
    </source>
</evidence>
<evidence type="ECO:0000269" key="12">
    <source>
    </source>
</evidence>
<evidence type="ECO:0000269" key="13">
    <source>
    </source>
</evidence>
<evidence type="ECO:0000269" key="14">
    <source>
    </source>
</evidence>
<evidence type="ECO:0000305" key="15"/>
<evidence type="ECO:0000305" key="16">
    <source>
    </source>
</evidence>
<evidence type="ECO:0007744" key="17">
    <source>
        <dbReference type="PDB" id="5Z56"/>
    </source>
</evidence>
<evidence type="ECO:0007744" key="18">
    <source>
        <dbReference type="PDB" id="5Z57"/>
    </source>
</evidence>
<evidence type="ECO:0007744" key="19">
    <source>
        <dbReference type="PDB" id="5Z58"/>
    </source>
</evidence>
<evidence type="ECO:0007744" key="20">
    <source>
        <dbReference type="PDB" id="7DVQ"/>
    </source>
</evidence>
<evidence type="ECO:0007744" key="21">
    <source>
    </source>
</evidence>
<evidence type="ECO:0007744" key="22">
    <source>
    </source>
</evidence>
<evidence type="ECO:0007744" key="23">
    <source>
    </source>
</evidence>
<evidence type="ECO:0007744" key="24">
    <source>
    </source>
</evidence>
<evidence type="ECO:0007744" key="25">
    <source>
    </source>
</evidence>
<evidence type="ECO:0007744" key="26">
    <source>
    </source>
</evidence>
<evidence type="ECO:0007744" key="27">
    <source>
    </source>
</evidence>
<evidence type="ECO:0007744" key="28">
    <source>
    </source>
</evidence>
<evidence type="ECO:0007744" key="29">
    <source>
    </source>
</evidence>
<evidence type="ECO:0007744" key="30">
    <source>
    </source>
</evidence>
<evidence type="ECO:0007744" key="31">
    <source>
    </source>
</evidence>
<evidence type="ECO:0007744" key="32">
    <source>
    </source>
</evidence>
<evidence type="ECO:0007829" key="33">
    <source>
        <dbReference type="PDB" id="7DVQ"/>
    </source>
</evidence>
<comment type="function">
    <text evidence="6 8 10 11 13 16">Required for pre-mRNA splicing as component of the spliceosome (PubMed:29360106). As a component of the minor spliceosome, involved in the splicing of U12-type introns in pre-mRNAs (Probable). Down-regulates NF-kappa-B signaling by competing with RELA for CREBBP/EP300 binding. Involved in the microRNA (miRNA) biogenesis. May be involved in cyclin-D1/CCND1 mRNA stability through the SNARP complex which associates with both the 3'end of the CCND1 gene and its mRNA.</text>
</comment>
<comment type="subunit">
    <text evidence="5 6 7 8 10 11 13 14">Component of activated spliceosome complexes (PubMed:29360106). Component of the minor spliceosome, which splices U12-type introns (PubMed:33509932). Binds SMAD4 and CREBBP/EP300. Binds the SMAD1/OAZ1/PSMB4 complex. Interacts with DROSHA and SMARCA4. Component of the SNARP complex which consists at least of SNIP1, SNW1, THRAP3, BCLAF1 and PNN.</text>
</comment>
<comment type="interaction">
    <interactant intactId="EBI-749336">
        <id>Q8TAD8</id>
    </interactant>
    <interactant intactId="EBI-750020">
        <id>P49760</id>
        <label>CLK2</label>
    </interactant>
    <organismsDiffer>false</organismsDiffer>
    <experiments>9</experiments>
</comment>
<comment type="interaction">
    <interactant intactId="EBI-749336">
        <id>Q8TAD8</id>
    </interactant>
    <interactant intactId="EBI-745579">
        <id>P49761</id>
        <label>CLK3</label>
    </interactant>
    <organismsDiffer>false</organismsDiffer>
    <experiments>4</experiments>
</comment>
<comment type="interaction">
    <interactant intactId="EBI-749336">
        <id>Q8TAD8</id>
    </interactant>
    <interactant intactId="EBI-739789">
        <id>Q92997</id>
        <label>DVL3</label>
    </interactant>
    <organismsDiffer>false</organismsDiffer>
    <experiments>3</experiments>
</comment>
<comment type="interaction">
    <interactant intactId="EBI-749336">
        <id>Q8TAD8</id>
    </interactant>
    <interactant intactId="EBI-12001340">
        <id>P62508-3</id>
        <label>ESRRG</label>
    </interactant>
    <organismsDiffer>false</organismsDiffer>
    <experiments>3</experiments>
</comment>
<comment type="interaction">
    <interactant intactId="EBI-749336">
        <id>Q8TAD8</id>
    </interactant>
    <interactant intactId="EBI-740553">
        <id>P13807</id>
        <label>GYS1</label>
    </interactant>
    <organismsDiffer>false</organismsDiffer>
    <experiments>3</experiments>
</comment>
<comment type="interaction">
    <interactant intactId="EBI-749336">
        <id>Q8TAD8</id>
    </interactant>
    <interactant intactId="EBI-713456">
        <id>Q13123</id>
        <label>IK</label>
    </interactant>
    <organismsDiffer>false</organismsDiffer>
    <experiments>2</experiments>
</comment>
<comment type="interaction">
    <interactant intactId="EBI-749336">
        <id>Q8TAD8</id>
    </interactant>
    <interactant intactId="EBI-12012928">
        <id>P60371</id>
        <label>KRTAP10-6</label>
    </interactant>
    <organismsDiffer>false</organismsDiffer>
    <experiments>3</experiments>
</comment>
<comment type="interaction">
    <interactant intactId="EBI-749336">
        <id>Q8TAD8</id>
    </interactant>
    <interactant intactId="EBI-1048159">
        <id>P55081</id>
        <label>MFAP1</label>
    </interactant>
    <organismsDiffer>false</organismsDiffer>
    <experiments>4</experiments>
</comment>
<comment type="interaction">
    <interactant intactId="EBI-749336">
        <id>Q8TAD8</id>
    </interactant>
    <interactant intactId="EBI-447544">
        <id>P01106</id>
        <label>MYC</label>
    </interactant>
    <organismsDiffer>false</organismsDiffer>
    <experiments>9</experiments>
</comment>
<comment type="interaction">
    <interactant intactId="EBI-749336">
        <id>Q8TAD8</id>
    </interactant>
    <interactant intactId="EBI-2339674">
        <id>Q5T6S3</id>
        <label>PHF19</label>
    </interactant>
    <organismsDiffer>false</organismsDiffer>
    <experiments>3</experiments>
</comment>
<comment type="interaction">
    <interactant intactId="EBI-749336">
        <id>Q8TAD8</id>
    </interactant>
    <interactant intactId="EBI-11526590">
        <id>P14859-6</id>
        <label>POU2F1</label>
    </interactant>
    <organismsDiffer>false</organismsDiffer>
    <experiments>3</experiments>
</comment>
<comment type="interaction">
    <interactant intactId="EBI-749336">
        <id>Q8TAD8</id>
    </interactant>
    <interactant intactId="EBI-632715">
        <id>Q13573</id>
        <label>SNW1</label>
    </interactant>
    <organismsDiffer>false</organismsDiffer>
    <experiments>8</experiments>
</comment>
<comment type="interaction">
    <interactant intactId="EBI-749336">
        <id>Q8TAD8</id>
    </interactant>
    <interactant intactId="EBI-12023934">
        <id>Q5MJ10</id>
        <label>SPANXN2</label>
    </interactant>
    <organismsDiffer>false</organismsDiffer>
    <experiments>3</experiments>
</comment>
<comment type="interaction">
    <interactant intactId="EBI-749336">
        <id>Q8TAD8</id>
    </interactant>
    <interactant intactId="EBI-593303">
        <id>P78362</id>
        <label>SRPK2</label>
    </interactant>
    <organismsDiffer>false</organismsDiffer>
    <experiments>4</experiments>
</comment>
<comment type="interaction">
    <interactant intactId="EBI-749336">
        <id>Q8TAD8</id>
    </interactant>
    <interactant intactId="EBI-1050142">
        <id>Q9UQ35</id>
        <label>SRRM2</label>
    </interactant>
    <organismsDiffer>false</organismsDiffer>
    <experiments>3</experiments>
</comment>
<comment type="interaction">
    <interactant intactId="EBI-749336">
        <id>Q8TAD8</id>
    </interactant>
    <interactant intactId="EBI-3867173">
        <id>A7MD48</id>
        <label>SRRM4</label>
    </interactant>
    <organismsDiffer>false</organismsDiffer>
    <experiments>6</experiments>
</comment>
<comment type="interaction">
    <interactant intactId="EBI-749336">
        <id>Q8TAD8</id>
    </interactant>
    <interactant intactId="EBI-992580">
        <id>Q13188</id>
        <label>STK3</label>
    </interactant>
    <organismsDiffer>false</organismsDiffer>
    <experiments>3</experiments>
</comment>
<comment type="interaction">
    <interactant intactId="EBI-749336">
        <id>Q8TAD8</id>
    </interactant>
    <interactant intactId="EBI-80140">
        <id>P63165</id>
        <label>SUMO1</label>
    </interactant>
    <organismsDiffer>false</organismsDiffer>
    <experiments>2</experiments>
</comment>
<comment type="interaction">
    <interactant intactId="EBI-749336">
        <id>Q8TAD8</id>
    </interactant>
    <interactant intactId="EBI-357849">
        <id>Q15025</id>
        <label>TNIP1</label>
    </interactant>
    <organismsDiffer>false</organismsDiffer>
    <experiments>4</experiments>
</comment>
<comment type="interaction">
    <interactant intactId="EBI-749336">
        <id>Q8TAD8</id>
    </interactant>
    <interactant intactId="EBI-947459">
        <id>Q9H2G4</id>
        <label>TSPYL2</label>
    </interactant>
    <organismsDiffer>false</organismsDiffer>
    <experiments>3</experiments>
</comment>
<comment type="interaction">
    <interactant intactId="EBI-749336">
        <id>Q8TAD8</id>
    </interactant>
    <interactant intactId="EBI-395708">
        <id>Q96C00</id>
        <label>ZBTB9</label>
    </interactant>
    <organismsDiffer>false</organismsDiffer>
    <experiments>6</experiments>
</comment>
<comment type="subcellular location">
    <subcellularLocation>
        <location evidence="5 13">Nucleus</location>
    </subcellularLocation>
</comment>
<comment type="tissue specificity">
    <text evidence="5">Ubiquitous, with highest expression in heart and skeletal muscle.</text>
</comment>
<comment type="PTM">
    <text>Degraded by the proteasome upon binding to the SMAD1/OAZ1/PSMB4 complex.</text>
</comment>
<comment type="disease" evidence="12">
    <disease id="DI-03405">
        <name>Neurodevelopmental disorder with hypotonia, craniofacial abnormalities, and seizures</name>
        <acronym>NEDHCS</acronym>
        <description>An autosomal recessive disease characterized by severe psychomotor retardation, intractable seizures, dysmorphic features, and a lumpy skull surface. Patients are hypotonic and have poor feeding in the neonatal period.</description>
        <dbReference type="MIM" id="614501"/>
    </disease>
    <text>The disease is caused by variants affecting the gene represented in this entry.</text>
</comment>